<organism>
    <name type="scientific">Arabidopsis thaliana</name>
    <name type="common">Mouse-ear cress</name>
    <dbReference type="NCBI Taxonomy" id="3702"/>
    <lineage>
        <taxon>Eukaryota</taxon>
        <taxon>Viridiplantae</taxon>
        <taxon>Streptophyta</taxon>
        <taxon>Embryophyta</taxon>
        <taxon>Tracheophyta</taxon>
        <taxon>Spermatophyta</taxon>
        <taxon>Magnoliopsida</taxon>
        <taxon>eudicotyledons</taxon>
        <taxon>Gunneridae</taxon>
        <taxon>Pentapetalae</taxon>
        <taxon>rosids</taxon>
        <taxon>malvids</taxon>
        <taxon>Brassicales</taxon>
        <taxon>Brassicaceae</taxon>
        <taxon>Camelineae</taxon>
        <taxon>Arabidopsis</taxon>
    </lineage>
</organism>
<keyword id="KW-1185">Reference proteome</keyword>
<proteinExistence type="evidence at transcript level"/>
<reference key="1">
    <citation type="journal article" date="2000" name="Nature">
        <title>Sequence and analysis of chromosome 5 of the plant Arabidopsis thaliana.</title>
        <authorList>
            <person name="Tabata S."/>
            <person name="Kaneko T."/>
            <person name="Nakamura Y."/>
            <person name="Kotani H."/>
            <person name="Kato T."/>
            <person name="Asamizu E."/>
            <person name="Miyajima N."/>
            <person name="Sasamoto S."/>
            <person name="Kimura T."/>
            <person name="Hosouchi T."/>
            <person name="Kawashima K."/>
            <person name="Kohara M."/>
            <person name="Matsumoto M."/>
            <person name="Matsuno A."/>
            <person name="Muraki A."/>
            <person name="Nakayama S."/>
            <person name="Nakazaki N."/>
            <person name="Naruo K."/>
            <person name="Okumura S."/>
            <person name="Shinpo S."/>
            <person name="Takeuchi C."/>
            <person name="Wada T."/>
            <person name="Watanabe A."/>
            <person name="Yamada M."/>
            <person name="Yasuda M."/>
            <person name="Sato S."/>
            <person name="de la Bastide M."/>
            <person name="Huang E."/>
            <person name="Spiegel L."/>
            <person name="Gnoj L."/>
            <person name="O'Shaughnessy A."/>
            <person name="Preston R."/>
            <person name="Habermann K."/>
            <person name="Murray J."/>
            <person name="Johnson D."/>
            <person name="Rohlfing T."/>
            <person name="Nelson J."/>
            <person name="Stoneking T."/>
            <person name="Pepin K."/>
            <person name="Spieth J."/>
            <person name="Sekhon M."/>
            <person name="Armstrong J."/>
            <person name="Becker M."/>
            <person name="Belter E."/>
            <person name="Cordum H."/>
            <person name="Cordes M."/>
            <person name="Courtney L."/>
            <person name="Courtney W."/>
            <person name="Dante M."/>
            <person name="Du H."/>
            <person name="Edwards J."/>
            <person name="Fryman J."/>
            <person name="Haakensen B."/>
            <person name="Lamar E."/>
            <person name="Latreille P."/>
            <person name="Leonard S."/>
            <person name="Meyer R."/>
            <person name="Mulvaney E."/>
            <person name="Ozersky P."/>
            <person name="Riley A."/>
            <person name="Strowmatt C."/>
            <person name="Wagner-McPherson C."/>
            <person name="Wollam A."/>
            <person name="Yoakum M."/>
            <person name="Bell M."/>
            <person name="Dedhia N."/>
            <person name="Parnell L."/>
            <person name="Shah R."/>
            <person name="Rodriguez M."/>
            <person name="Hoon See L."/>
            <person name="Vil D."/>
            <person name="Baker J."/>
            <person name="Kirchoff K."/>
            <person name="Toth K."/>
            <person name="King L."/>
            <person name="Bahret A."/>
            <person name="Miller B."/>
            <person name="Marra M.A."/>
            <person name="Martienssen R."/>
            <person name="McCombie W.R."/>
            <person name="Wilson R.K."/>
            <person name="Murphy G."/>
            <person name="Bancroft I."/>
            <person name="Volckaert G."/>
            <person name="Wambutt R."/>
            <person name="Duesterhoeft A."/>
            <person name="Stiekema W."/>
            <person name="Pohl T."/>
            <person name="Entian K.-D."/>
            <person name="Terryn N."/>
            <person name="Hartley N."/>
            <person name="Bent E."/>
            <person name="Johnson S."/>
            <person name="Langham S.-A."/>
            <person name="McCullagh B."/>
            <person name="Robben J."/>
            <person name="Grymonprez B."/>
            <person name="Zimmermann W."/>
            <person name="Ramsperger U."/>
            <person name="Wedler H."/>
            <person name="Balke K."/>
            <person name="Wedler E."/>
            <person name="Peters S."/>
            <person name="van Staveren M."/>
            <person name="Dirkse W."/>
            <person name="Mooijman P."/>
            <person name="Klein Lankhorst R."/>
            <person name="Weitzenegger T."/>
            <person name="Bothe G."/>
            <person name="Rose M."/>
            <person name="Hauf J."/>
            <person name="Berneiser S."/>
            <person name="Hempel S."/>
            <person name="Feldpausch M."/>
            <person name="Lamberth S."/>
            <person name="Villarroel R."/>
            <person name="Gielen J."/>
            <person name="Ardiles W."/>
            <person name="Bents O."/>
            <person name="Lemcke K."/>
            <person name="Kolesov G."/>
            <person name="Mayer K.F.X."/>
            <person name="Rudd S."/>
            <person name="Schoof H."/>
            <person name="Schueller C."/>
            <person name="Zaccaria P."/>
            <person name="Mewes H.-W."/>
            <person name="Bevan M."/>
            <person name="Fransz P.F."/>
        </authorList>
    </citation>
    <scope>NUCLEOTIDE SEQUENCE [LARGE SCALE GENOMIC DNA]</scope>
    <source>
        <strain>cv. Columbia</strain>
    </source>
</reference>
<reference key="2">
    <citation type="journal article" date="2017" name="Plant J.">
        <title>Araport11: a complete reannotation of the Arabidopsis thaliana reference genome.</title>
        <authorList>
            <person name="Cheng C.Y."/>
            <person name="Krishnakumar V."/>
            <person name="Chan A.P."/>
            <person name="Thibaud-Nissen F."/>
            <person name="Schobel S."/>
            <person name="Town C.D."/>
        </authorList>
    </citation>
    <scope>GENOME REANNOTATION</scope>
    <source>
        <strain>cv. Columbia</strain>
    </source>
</reference>
<reference key="3">
    <citation type="journal article" date="2002" name="Plant Physiol.">
        <title>The LATERAL ORGAN BOUNDARIES gene defines a novel, plant-specific gene family.</title>
        <authorList>
            <person name="Shuai B."/>
            <person name="Reynaga-Pena C.G."/>
            <person name="Springer P.S."/>
        </authorList>
    </citation>
    <scope>GENE FAMILY</scope>
    <scope>NOMENCLATURE</scope>
</reference>
<accession>P59469</accession>
<comment type="similarity">
    <text evidence="2">Belongs to the LOB domain-containing protein family.</text>
</comment>
<protein>
    <recommendedName>
        <fullName>LOB domain-containing protein 34</fullName>
    </recommendedName>
    <alternativeName>
        <fullName>ASYMMETRIC LEAVES 2-like protein 42</fullName>
        <shortName>AS2-like protein 42</shortName>
    </alternativeName>
</protein>
<name>LBD34_ARATH</name>
<sequence>MTLQGSSGVNNGGYVNQCAACRHQRRRCTPDCFFRPYFPAERHQEFQNFHRLHSNTRLQKKLKELGLSPEEQREAMSSIIYESNIRSQFPGPSVAVTNTFSIFEPKSHSSPLNYVAPVIKSPPLSSIPPPPASLIPPLTTS</sequence>
<feature type="chain" id="PRO_0000132285" description="LOB domain-containing protein 34">
    <location>
        <begin position="1"/>
        <end position="141"/>
    </location>
</feature>
<feature type="domain" description="LOB" evidence="1">
    <location>
        <begin position="16"/>
        <end position="119"/>
    </location>
</feature>
<evidence type="ECO:0000255" key="1">
    <source>
        <dbReference type="PROSITE-ProRule" id="PRU00291"/>
    </source>
</evidence>
<evidence type="ECO:0000305" key="2"/>
<dbReference type="EMBL" id="AL391146">
    <property type="status" value="NOT_ANNOTATED_CDS"/>
    <property type="molecule type" value="Genomic_DNA"/>
</dbReference>
<dbReference type="EMBL" id="CP002688">
    <property type="protein sequence ID" value="AED92111.1"/>
    <property type="molecule type" value="Genomic_DNA"/>
</dbReference>
<dbReference type="RefSeq" id="NP_197010.2">
    <property type="nucleotide sequence ID" value="NM_121510.2"/>
</dbReference>
<dbReference type="SMR" id="P59469"/>
<dbReference type="BioGRID" id="16635">
    <property type="interactions" value="6"/>
</dbReference>
<dbReference type="IntAct" id="P59469">
    <property type="interactions" value="6"/>
</dbReference>
<dbReference type="STRING" id="3702.P59469"/>
<dbReference type="PaxDb" id="3702-AT5G15060.1"/>
<dbReference type="EnsemblPlants" id="AT5G15060.1">
    <property type="protein sequence ID" value="AT5G15060.1"/>
    <property type="gene ID" value="AT5G15060"/>
</dbReference>
<dbReference type="GeneID" id="831358"/>
<dbReference type="Gramene" id="AT5G15060.1">
    <property type="protein sequence ID" value="AT5G15060.1"/>
    <property type="gene ID" value="AT5G15060"/>
</dbReference>
<dbReference type="KEGG" id="ath:AT5G15060"/>
<dbReference type="Araport" id="AT5G15060"/>
<dbReference type="TAIR" id="AT5G15060"/>
<dbReference type="HOGENOM" id="CLU_1827972_0_0_1"/>
<dbReference type="InParanoid" id="P59469"/>
<dbReference type="PhylomeDB" id="P59469"/>
<dbReference type="PRO" id="PR:P59469"/>
<dbReference type="Proteomes" id="UP000006548">
    <property type="component" value="Chromosome 5"/>
</dbReference>
<dbReference type="ExpressionAtlas" id="P59469">
    <property type="expression patterns" value="baseline and differential"/>
</dbReference>
<dbReference type="InterPro" id="IPR004883">
    <property type="entry name" value="LOB"/>
</dbReference>
<dbReference type="PANTHER" id="PTHR31301:SF21">
    <property type="entry name" value="LOB DOMAIN-CONTAINING PROTEIN 27-RELATED"/>
    <property type="match status" value="1"/>
</dbReference>
<dbReference type="PANTHER" id="PTHR31301">
    <property type="entry name" value="LOB DOMAIN-CONTAINING PROTEIN 4-RELATED"/>
    <property type="match status" value="1"/>
</dbReference>
<dbReference type="Pfam" id="PF03195">
    <property type="entry name" value="LOB"/>
    <property type="match status" value="1"/>
</dbReference>
<dbReference type="PROSITE" id="PS50891">
    <property type="entry name" value="LOB"/>
    <property type="match status" value="1"/>
</dbReference>
<gene>
    <name type="primary">LBD34</name>
    <name type="synonym">ASL42</name>
    <name type="ordered locus">At5g15060</name>
    <name type="ORF">F2G14</name>
</gene>